<proteinExistence type="evidence at protein level"/>
<organism>
    <name type="scientific">Homo sapiens</name>
    <name type="common">Human</name>
    <dbReference type="NCBI Taxonomy" id="9606"/>
    <lineage>
        <taxon>Eukaryota</taxon>
        <taxon>Metazoa</taxon>
        <taxon>Chordata</taxon>
        <taxon>Craniata</taxon>
        <taxon>Vertebrata</taxon>
        <taxon>Euteleostomi</taxon>
        <taxon>Mammalia</taxon>
        <taxon>Eutheria</taxon>
        <taxon>Euarchontoglires</taxon>
        <taxon>Primates</taxon>
        <taxon>Haplorrhini</taxon>
        <taxon>Catarrhini</taxon>
        <taxon>Hominidae</taxon>
        <taxon>Homo</taxon>
    </lineage>
</organism>
<feature type="chain" id="PRO_0000347060" description="Phosphoinositide-interacting protein">
    <location>
        <begin position="1"/>
        <end position="137"/>
    </location>
</feature>
<feature type="transmembrane region" description="Helical" evidence="2">
    <location>
        <begin position="56"/>
        <end position="76"/>
    </location>
</feature>
<feature type="transmembrane region" description="Helical" evidence="2">
    <location>
        <begin position="94"/>
        <end position="114"/>
    </location>
</feature>
<dbReference type="EMBL" id="AK299808">
    <property type="protein sequence ID" value="BAH13134.1"/>
    <property type="molecule type" value="mRNA"/>
</dbReference>
<dbReference type="EMBL" id="DC332889">
    <property type="status" value="NOT_ANNOTATED_CDS"/>
    <property type="molecule type" value="mRNA"/>
</dbReference>
<dbReference type="EMBL" id="AC015908">
    <property type="status" value="NOT_ANNOTATED_CDS"/>
    <property type="molecule type" value="Genomic_DNA"/>
</dbReference>
<dbReference type="EMBL" id="CH471108">
    <property type="protein sequence ID" value="EAW89989.1"/>
    <property type="molecule type" value="Genomic_DNA"/>
</dbReference>
<dbReference type="CCDS" id="CCDS45614.1"/>
<dbReference type="RefSeq" id="NP_001094857.1">
    <property type="nucleotide sequence ID" value="NM_001101387.2"/>
</dbReference>
<dbReference type="SMR" id="P0C851"/>
<dbReference type="BioGRID" id="569345">
    <property type="interactions" value="1"/>
</dbReference>
<dbReference type="STRING" id="9606.ENSP00000462046"/>
<dbReference type="TCDB" id="8.A.64.1.1">
    <property type="family name" value="the phosphoinositide-interacting protein (pirt) family"/>
</dbReference>
<dbReference type="iPTMnet" id="P0C851"/>
<dbReference type="PhosphoSitePlus" id="P0C851"/>
<dbReference type="BioMuta" id="PIRT"/>
<dbReference type="DMDM" id="308153473"/>
<dbReference type="jPOST" id="P0C851"/>
<dbReference type="MassIVE" id="P0C851"/>
<dbReference type="PaxDb" id="9606-ENSP00000462046"/>
<dbReference type="PeptideAtlas" id="P0C851"/>
<dbReference type="ProteomicsDB" id="52394"/>
<dbReference type="Antibodypedia" id="47967">
    <property type="antibodies" value="25 antibodies from 7 providers"/>
</dbReference>
<dbReference type="DNASU" id="644139"/>
<dbReference type="Ensembl" id="ENST00000580256.3">
    <property type="protein sequence ID" value="ENSP00000462046.1"/>
    <property type="gene ID" value="ENSG00000233670.7"/>
</dbReference>
<dbReference type="GeneID" id="644139"/>
<dbReference type="KEGG" id="hsa:644139"/>
<dbReference type="MANE-Select" id="ENST00000580256.3">
    <property type="protein sequence ID" value="ENSP00000462046.1"/>
    <property type="RefSeq nucleotide sequence ID" value="NM_001101387.2"/>
    <property type="RefSeq protein sequence ID" value="NP_001094857.1"/>
</dbReference>
<dbReference type="UCSC" id="uc010col.4">
    <property type="organism name" value="human"/>
</dbReference>
<dbReference type="AGR" id="HGNC:37239"/>
<dbReference type="CTD" id="644139"/>
<dbReference type="GeneCards" id="PIRT"/>
<dbReference type="HGNC" id="HGNC:37239">
    <property type="gene designation" value="PIRT"/>
</dbReference>
<dbReference type="HPA" id="ENSG00000233670">
    <property type="expression patterns" value="Tissue enhanced (brain, intestine)"/>
</dbReference>
<dbReference type="MIM" id="612068">
    <property type="type" value="gene"/>
</dbReference>
<dbReference type="neXtProt" id="NX_P0C851"/>
<dbReference type="OpenTargets" id="ENSG00000233670"/>
<dbReference type="VEuPathDB" id="HostDB:ENSG00000233670"/>
<dbReference type="eggNOG" id="ENOG502S54V">
    <property type="taxonomic scope" value="Eukaryota"/>
</dbReference>
<dbReference type="GeneTree" id="ENSGT00940000154322"/>
<dbReference type="HOGENOM" id="CLU_1906059_0_0_1"/>
<dbReference type="InParanoid" id="P0C851"/>
<dbReference type="OMA" id="FPIHFMS"/>
<dbReference type="OrthoDB" id="9905550at2759"/>
<dbReference type="PAN-GO" id="P0C851">
    <property type="GO annotations" value="5 GO annotations based on evolutionary models"/>
</dbReference>
<dbReference type="PhylomeDB" id="P0C851"/>
<dbReference type="TreeFam" id="TF328608"/>
<dbReference type="PathwayCommons" id="P0C851"/>
<dbReference type="BioGRID-ORCS" id="644139">
    <property type="hits" value="16 hits in 1141 CRISPR screens"/>
</dbReference>
<dbReference type="GenomeRNAi" id="644139"/>
<dbReference type="Pharos" id="P0C851">
    <property type="development level" value="Tdark"/>
</dbReference>
<dbReference type="PRO" id="PR:P0C851"/>
<dbReference type="Proteomes" id="UP000005640">
    <property type="component" value="Chromosome 17"/>
</dbReference>
<dbReference type="RNAct" id="P0C851">
    <property type="molecule type" value="protein"/>
</dbReference>
<dbReference type="Bgee" id="ENSG00000233670">
    <property type="expression patterns" value="Expressed in dorsal root ganglion and 77 other cell types or tissues"/>
</dbReference>
<dbReference type="GO" id="GO:0005886">
    <property type="term" value="C:plasma membrane"/>
    <property type="evidence" value="ECO:0000318"/>
    <property type="project" value="GO_Central"/>
</dbReference>
<dbReference type="GO" id="GO:1902936">
    <property type="term" value="F:phosphatidylinositol bisphosphate binding"/>
    <property type="evidence" value="ECO:0000318"/>
    <property type="project" value="GO_Central"/>
</dbReference>
<dbReference type="GO" id="GO:0005547">
    <property type="term" value="F:phosphatidylinositol-3,4,5-trisphosphate binding"/>
    <property type="evidence" value="ECO:0007669"/>
    <property type="project" value="Ensembl"/>
</dbReference>
<dbReference type="GO" id="GO:0044325">
    <property type="term" value="F:transmembrane transporter binding"/>
    <property type="evidence" value="ECO:0000318"/>
    <property type="project" value="GO_Central"/>
</dbReference>
<dbReference type="GO" id="GO:0048266">
    <property type="term" value="P:behavioral response to pain"/>
    <property type="evidence" value="ECO:0007669"/>
    <property type="project" value="Ensembl"/>
</dbReference>
<dbReference type="GO" id="GO:0051930">
    <property type="term" value="P:regulation of sensory perception of pain"/>
    <property type="evidence" value="ECO:0000318"/>
    <property type="project" value="GO_Central"/>
</dbReference>
<dbReference type="GO" id="GO:0009408">
    <property type="term" value="P:response to heat"/>
    <property type="evidence" value="ECO:0007669"/>
    <property type="project" value="Ensembl"/>
</dbReference>
<dbReference type="InterPro" id="IPR028068">
    <property type="entry name" value="PIRT"/>
</dbReference>
<dbReference type="PANTHER" id="PTHR16100:SF4">
    <property type="entry name" value="PHOSPHOINOSITIDE-INTERACTING PROTEIN"/>
    <property type="match status" value="1"/>
</dbReference>
<dbReference type="PANTHER" id="PTHR16100">
    <property type="entry name" value="PHOSPHOINOSITIDE-INTERACTING PROTEIN FAMILY MEMBER"/>
    <property type="match status" value="1"/>
</dbReference>
<dbReference type="Pfam" id="PF15099">
    <property type="entry name" value="PIRT"/>
    <property type="match status" value="1"/>
</dbReference>
<comment type="function">
    <text evidence="1">Regulatory subunit of TRPV1, a molecular sensor of noxious heat and capsaicin. Positively regulates TRPV1 channel activity via phosphatidylinositol 4,5-bisphosphate (PIP2). Binds various phosphoinositide, including phosphatidylinositol 4,5-bisphosphate (PIP2), but not phosphatidylinositol (PI) (By similarity).</text>
</comment>
<comment type="subunit">
    <text evidence="1">Interacts with TRPV1.</text>
</comment>
<comment type="subcellular location">
    <subcellularLocation>
        <location evidence="3">Membrane</location>
        <topology evidence="3">Multi-pass membrane protein</topology>
    </subcellularLocation>
</comment>
<comment type="caution">
    <text evidence="3">It is uncertain whether Met-1 or Met-3 is the initiator.</text>
</comment>
<accession>P0C851</accession>
<accession>B7Z648</accession>
<keyword id="KW-0472">Membrane</keyword>
<keyword id="KW-1267">Proteomics identification</keyword>
<keyword id="KW-1185">Reference proteome</keyword>
<keyword id="KW-0812">Transmembrane</keyword>
<keyword id="KW-1133">Transmembrane helix</keyword>
<evidence type="ECO:0000250" key="1"/>
<evidence type="ECO:0000255" key="2"/>
<evidence type="ECO:0000305" key="3"/>
<gene>
    <name type="primary">PIRT</name>
</gene>
<reference key="1">
    <citation type="journal article" date="2004" name="Nat. Genet.">
        <title>Complete sequencing and characterization of 21,243 full-length human cDNAs.</title>
        <authorList>
            <person name="Ota T."/>
            <person name="Suzuki Y."/>
            <person name="Nishikawa T."/>
            <person name="Otsuki T."/>
            <person name="Sugiyama T."/>
            <person name="Irie R."/>
            <person name="Wakamatsu A."/>
            <person name="Hayashi K."/>
            <person name="Sato H."/>
            <person name="Nagai K."/>
            <person name="Kimura K."/>
            <person name="Makita H."/>
            <person name="Sekine M."/>
            <person name="Obayashi M."/>
            <person name="Nishi T."/>
            <person name="Shibahara T."/>
            <person name="Tanaka T."/>
            <person name="Ishii S."/>
            <person name="Yamamoto J."/>
            <person name="Saito K."/>
            <person name="Kawai Y."/>
            <person name="Isono Y."/>
            <person name="Nakamura Y."/>
            <person name="Nagahari K."/>
            <person name="Murakami K."/>
            <person name="Yasuda T."/>
            <person name="Iwayanagi T."/>
            <person name="Wagatsuma M."/>
            <person name="Shiratori A."/>
            <person name="Sudo H."/>
            <person name="Hosoiri T."/>
            <person name="Kaku Y."/>
            <person name="Kodaira H."/>
            <person name="Kondo H."/>
            <person name="Sugawara M."/>
            <person name="Takahashi M."/>
            <person name="Kanda K."/>
            <person name="Yokoi T."/>
            <person name="Furuya T."/>
            <person name="Kikkawa E."/>
            <person name="Omura Y."/>
            <person name="Abe K."/>
            <person name="Kamihara K."/>
            <person name="Katsuta N."/>
            <person name="Sato K."/>
            <person name="Tanikawa M."/>
            <person name="Yamazaki M."/>
            <person name="Ninomiya K."/>
            <person name="Ishibashi T."/>
            <person name="Yamashita H."/>
            <person name="Murakawa K."/>
            <person name="Fujimori K."/>
            <person name="Tanai H."/>
            <person name="Kimata M."/>
            <person name="Watanabe M."/>
            <person name="Hiraoka S."/>
            <person name="Chiba Y."/>
            <person name="Ishida S."/>
            <person name="Ono Y."/>
            <person name="Takiguchi S."/>
            <person name="Watanabe S."/>
            <person name="Yosida M."/>
            <person name="Hotuta T."/>
            <person name="Kusano J."/>
            <person name="Kanehori K."/>
            <person name="Takahashi-Fujii A."/>
            <person name="Hara H."/>
            <person name="Tanase T.-O."/>
            <person name="Nomura Y."/>
            <person name="Togiya S."/>
            <person name="Komai F."/>
            <person name="Hara R."/>
            <person name="Takeuchi K."/>
            <person name="Arita M."/>
            <person name="Imose N."/>
            <person name="Musashino K."/>
            <person name="Yuuki H."/>
            <person name="Oshima A."/>
            <person name="Sasaki N."/>
            <person name="Aotsuka S."/>
            <person name="Yoshikawa Y."/>
            <person name="Matsunawa H."/>
            <person name="Ichihara T."/>
            <person name="Shiohata N."/>
            <person name="Sano S."/>
            <person name="Moriya S."/>
            <person name="Momiyama H."/>
            <person name="Satoh N."/>
            <person name="Takami S."/>
            <person name="Terashima Y."/>
            <person name="Suzuki O."/>
            <person name="Nakagawa S."/>
            <person name="Senoh A."/>
            <person name="Mizoguchi H."/>
            <person name="Goto Y."/>
            <person name="Shimizu F."/>
            <person name="Wakebe H."/>
            <person name="Hishigaki H."/>
            <person name="Watanabe T."/>
            <person name="Sugiyama A."/>
            <person name="Takemoto M."/>
            <person name="Kawakami B."/>
            <person name="Yamazaki M."/>
            <person name="Watanabe K."/>
            <person name="Kumagai A."/>
            <person name="Itakura S."/>
            <person name="Fukuzumi Y."/>
            <person name="Fujimori Y."/>
            <person name="Komiyama M."/>
            <person name="Tashiro H."/>
            <person name="Tanigami A."/>
            <person name="Fujiwara T."/>
            <person name="Ono T."/>
            <person name="Yamada K."/>
            <person name="Fujii Y."/>
            <person name="Ozaki K."/>
            <person name="Hirao M."/>
            <person name="Ohmori Y."/>
            <person name="Kawabata A."/>
            <person name="Hikiji T."/>
            <person name="Kobatake N."/>
            <person name="Inagaki H."/>
            <person name="Ikema Y."/>
            <person name="Okamoto S."/>
            <person name="Okitani R."/>
            <person name="Kawakami T."/>
            <person name="Noguchi S."/>
            <person name="Itoh T."/>
            <person name="Shigeta K."/>
            <person name="Senba T."/>
            <person name="Matsumura K."/>
            <person name="Nakajima Y."/>
            <person name="Mizuno T."/>
            <person name="Morinaga M."/>
            <person name="Sasaki M."/>
            <person name="Togashi T."/>
            <person name="Oyama M."/>
            <person name="Hata H."/>
            <person name="Watanabe M."/>
            <person name="Komatsu T."/>
            <person name="Mizushima-Sugano J."/>
            <person name="Satoh T."/>
            <person name="Shirai Y."/>
            <person name="Takahashi Y."/>
            <person name="Nakagawa K."/>
            <person name="Okumura K."/>
            <person name="Nagase T."/>
            <person name="Nomura N."/>
            <person name="Kikuchi H."/>
            <person name="Masuho Y."/>
            <person name="Yamashita R."/>
            <person name="Nakai K."/>
            <person name="Yada T."/>
            <person name="Nakamura Y."/>
            <person name="Ohara O."/>
            <person name="Isogai T."/>
            <person name="Sugano S."/>
        </authorList>
    </citation>
    <scope>NUCLEOTIDE SEQUENCE [LARGE SCALE MRNA]</scope>
    <source>
        <tissue>Fetal brain</tissue>
        <tissue>Hippocampus</tissue>
    </source>
</reference>
<reference key="2">
    <citation type="journal article" date="2006" name="Nature">
        <title>DNA sequence of human chromosome 17 and analysis of rearrangement in the human lineage.</title>
        <authorList>
            <person name="Zody M.C."/>
            <person name="Garber M."/>
            <person name="Adams D.J."/>
            <person name="Sharpe T."/>
            <person name="Harrow J."/>
            <person name="Lupski J.R."/>
            <person name="Nicholson C."/>
            <person name="Searle S.M."/>
            <person name="Wilming L."/>
            <person name="Young S.K."/>
            <person name="Abouelleil A."/>
            <person name="Allen N.R."/>
            <person name="Bi W."/>
            <person name="Bloom T."/>
            <person name="Borowsky M.L."/>
            <person name="Bugalter B.E."/>
            <person name="Butler J."/>
            <person name="Chang J.L."/>
            <person name="Chen C.-K."/>
            <person name="Cook A."/>
            <person name="Corum B."/>
            <person name="Cuomo C.A."/>
            <person name="de Jong P.J."/>
            <person name="DeCaprio D."/>
            <person name="Dewar K."/>
            <person name="FitzGerald M."/>
            <person name="Gilbert J."/>
            <person name="Gibson R."/>
            <person name="Gnerre S."/>
            <person name="Goldstein S."/>
            <person name="Grafham D.V."/>
            <person name="Grocock R."/>
            <person name="Hafez N."/>
            <person name="Hagopian D.S."/>
            <person name="Hart E."/>
            <person name="Norman C.H."/>
            <person name="Humphray S."/>
            <person name="Jaffe D.B."/>
            <person name="Jones M."/>
            <person name="Kamal M."/>
            <person name="Khodiyar V.K."/>
            <person name="LaButti K."/>
            <person name="Laird G."/>
            <person name="Lehoczky J."/>
            <person name="Liu X."/>
            <person name="Lokyitsang T."/>
            <person name="Loveland J."/>
            <person name="Lui A."/>
            <person name="Macdonald P."/>
            <person name="Major J.E."/>
            <person name="Matthews L."/>
            <person name="Mauceli E."/>
            <person name="McCarroll S.A."/>
            <person name="Mihalev A.H."/>
            <person name="Mudge J."/>
            <person name="Nguyen C."/>
            <person name="Nicol R."/>
            <person name="O'Leary S.B."/>
            <person name="Osoegawa K."/>
            <person name="Schwartz D.C."/>
            <person name="Shaw-Smith C."/>
            <person name="Stankiewicz P."/>
            <person name="Steward C."/>
            <person name="Swarbreck D."/>
            <person name="Venkataraman V."/>
            <person name="Whittaker C.A."/>
            <person name="Yang X."/>
            <person name="Zimmer A.R."/>
            <person name="Bradley A."/>
            <person name="Hubbard T."/>
            <person name="Birren B.W."/>
            <person name="Rogers J."/>
            <person name="Lander E.S."/>
            <person name="Nusbaum C."/>
        </authorList>
    </citation>
    <scope>NUCLEOTIDE SEQUENCE [LARGE SCALE GENOMIC DNA]</scope>
</reference>
<reference key="3">
    <citation type="submission" date="2005-09" db="EMBL/GenBank/DDBJ databases">
        <authorList>
            <person name="Mural R.J."/>
            <person name="Istrail S."/>
            <person name="Sutton G.G."/>
            <person name="Florea L."/>
            <person name="Halpern A.L."/>
            <person name="Mobarry C.M."/>
            <person name="Lippert R."/>
            <person name="Walenz B."/>
            <person name="Shatkay H."/>
            <person name="Dew I."/>
            <person name="Miller J.R."/>
            <person name="Flanigan M.J."/>
            <person name="Edwards N.J."/>
            <person name="Bolanos R."/>
            <person name="Fasulo D."/>
            <person name="Halldorsson B.V."/>
            <person name="Hannenhalli S."/>
            <person name="Turner R."/>
            <person name="Yooseph S."/>
            <person name="Lu F."/>
            <person name="Nusskern D.R."/>
            <person name="Shue B.C."/>
            <person name="Zheng X.H."/>
            <person name="Zhong F."/>
            <person name="Delcher A.L."/>
            <person name="Huson D.H."/>
            <person name="Kravitz S.A."/>
            <person name="Mouchard L."/>
            <person name="Reinert K."/>
            <person name="Remington K.A."/>
            <person name="Clark A.G."/>
            <person name="Waterman M.S."/>
            <person name="Eichler E.E."/>
            <person name="Adams M.D."/>
            <person name="Hunkapiller M.W."/>
            <person name="Myers E.W."/>
            <person name="Venter J.C."/>
        </authorList>
    </citation>
    <scope>NUCLEOTIDE SEQUENCE [LARGE SCALE GENOMIC DNA]</scope>
</reference>
<name>PIRT_HUMAN</name>
<protein>
    <recommendedName>
        <fullName>Phosphoinositide-interacting protein</fullName>
    </recommendedName>
</protein>
<sequence>MTMETLPKVLEVDEKSPEAKDLLPSQTASSLCISSRSESVWTTTPRSNWEIYRKPIVIMSVGGAILLFGVVITCLAYTLKLSDKSLSILKMVGPGFLSLGLMMLVCGLVWVPIIKKKQKHRQKSNFLRSLKSFFLTR</sequence>